<gene>
    <name evidence="1" type="primary">secA</name>
    <name type="ordered locus">ESA_03240</name>
</gene>
<reference key="1">
    <citation type="journal article" date="2010" name="PLoS ONE">
        <title>Genome sequence of Cronobacter sakazakii BAA-894 and comparative genomic hybridization analysis with other Cronobacter species.</title>
        <authorList>
            <person name="Kucerova E."/>
            <person name="Clifton S.W."/>
            <person name="Xia X.Q."/>
            <person name="Long F."/>
            <person name="Porwollik S."/>
            <person name="Fulton L."/>
            <person name="Fronick C."/>
            <person name="Minx P."/>
            <person name="Kyung K."/>
            <person name="Warren W."/>
            <person name="Fulton R."/>
            <person name="Feng D."/>
            <person name="Wollam A."/>
            <person name="Shah N."/>
            <person name="Bhonagiri V."/>
            <person name="Nash W.E."/>
            <person name="Hallsworth-Pepin K."/>
            <person name="Wilson R.K."/>
            <person name="McClelland M."/>
            <person name="Forsythe S.J."/>
        </authorList>
    </citation>
    <scope>NUCLEOTIDE SEQUENCE [LARGE SCALE GENOMIC DNA]</scope>
    <source>
        <strain>ATCC BAA-894</strain>
    </source>
</reference>
<evidence type="ECO:0000255" key="1">
    <source>
        <dbReference type="HAMAP-Rule" id="MF_01382"/>
    </source>
</evidence>
<evidence type="ECO:0000256" key="2">
    <source>
        <dbReference type="SAM" id="MobiDB-lite"/>
    </source>
</evidence>
<keyword id="KW-0067">ATP-binding</keyword>
<keyword id="KW-0997">Cell inner membrane</keyword>
<keyword id="KW-1003">Cell membrane</keyword>
<keyword id="KW-0963">Cytoplasm</keyword>
<keyword id="KW-0472">Membrane</keyword>
<keyword id="KW-0479">Metal-binding</keyword>
<keyword id="KW-0547">Nucleotide-binding</keyword>
<keyword id="KW-0653">Protein transport</keyword>
<keyword id="KW-1185">Reference proteome</keyword>
<keyword id="KW-1278">Translocase</keyword>
<keyword id="KW-0811">Translocation</keyword>
<keyword id="KW-0813">Transport</keyword>
<keyword id="KW-0862">Zinc</keyword>
<proteinExistence type="inferred from homology"/>
<accession>A7MQ63</accession>
<comment type="function">
    <text evidence="1">Part of the Sec protein translocase complex. Interacts with the SecYEG preprotein conducting channel. Has a central role in coupling the hydrolysis of ATP to the transfer of proteins into and across the cell membrane, serving both as a receptor for the preprotein-SecB complex and as an ATP-driven molecular motor driving the stepwise translocation of polypeptide chains across the membrane.</text>
</comment>
<comment type="catalytic activity">
    <reaction evidence="1">
        <text>ATP + H2O + cellular proteinSide 1 = ADP + phosphate + cellular proteinSide 2.</text>
        <dbReference type="EC" id="7.4.2.8"/>
    </reaction>
</comment>
<comment type="cofactor">
    <cofactor evidence="1">
        <name>Zn(2+)</name>
        <dbReference type="ChEBI" id="CHEBI:29105"/>
    </cofactor>
    <text evidence="1">May bind 1 zinc ion per subunit.</text>
</comment>
<comment type="subunit">
    <text evidence="1">Monomer and homodimer. Part of the essential Sec protein translocation apparatus which comprises SecA, SecYEG and auxiliary proteins SecDF-YajC and YidC.</text>
</comment>
<comment type="subcellular location">
    <subcellularLocation>
        <location evidence="1">Cell inner membrane</location>
        <topology evidence="1">Peripheral membrane protein</topology>
        <orientation evidence="1">Cytoplasmic side</orientation>
    </subcellularLocation>
    <subcellularLocation>
        <location evidence="1">Cytoplasm</location>
    </subcellularLocation>
    <text evidence="1">Distribution is 50-50.</text>
</comment>
<comment type="induction">
    <text evidence="1">Repressed under conditions of excess protein secretion capacity and derepressed when protein secretion becomes limiting. This is regulated by SecM.</text>
</comment>
<comment type="similarity">
    <text evidence="1">Belongs to the SecA family.</text>
</comment>
<feature type="chain" id="PRO_0000320799" description="Protein translocase subunit SecA">
    <location>
        <begin position="1"/>
        <end position="901"/>
    </location>
</feature>
<feature type="region of interest" description="Disordered" evidence="2">
    <location>
        <begin position="855"/>
        <end position="891"/>
    </location>
</feature>
<feature type="binding site" evidence="1">
    <location>
        <position position="87"/>
    </location>
    <ligand>
        <name>ATP</name>
        <dbReference type="ChEBI" id="CHEBI:30616"/>
    </ligand>
</feature>
<feature type="binding site" evidence="1">
    <location>
        <begin position="105"/>
        <end position="109"/>
    </location>
    <ligand>
        <name>ATP</name>
        <dbReference type="ChEBI" id="CHEBI:30616"/>
    </ligand>
</feature>
<feature type="binding site" evidence="1">
    <location>
        <position position="512"/>
    </location>
    <ligand>
        <name>ATP</name>
        <dbReference type="ChEBI" id="CHEBI:30616"/>
    </ligand>
</feature>
<feature type="binding site" evidence="1">
    <location>
        <position position="885"/>
    </location>
    <ligand>
        <name>Zn(2+)</name>
        <dbReference type="ChEBI" id="CHEBI:29105"/>
    </ligand>
</feature>
<feature type="binding site" evidence="1">
    <location>
        <position position="887"/>
    </location>
    <ligand>
        <name>Zn(2+)</name>
        <dbReference type="ChEBI" id="CHEBI:29105"/>
    </ligand>
</feature>
<feature type="binding site" evidence="1">
    <location>
        <position position="896"/>
    </location>
    <ligand>
        <name>Zn(2+)</name>
        <dbReference type="ChEBI" id="CHEBI:29105"/>
    </ligand>
</feature>
<feature type="binding site" evidence="1">
    <location>
        <position position="897"/>
    </location>
    <ligand>
        <name>Zn(2+)</name>
        <dbReference type="ChEBI" id="CHEBI:29105"/>
    </ligand>
</feature>
<organism>
    <name type="scientific">Cronobacter sakazakii (strain ATCC BAA-894)</name>
    <name type="common">Enterobacter sakazakii</name>
    <dbReference type="NCBI Taxonomy" id="290339"/>
    <lineage>
        <taxon>Bacteria</taxon>
        <taxon>Pseudomonadati</taxon>
        <taxon>Pseudomonadota</taxon>
        <taxon>Gammaproteobacteria</taxon>
        <taxon>Enterobacterales</taxon>
        <taxon>Enterobacteriaceae</taxon>
        <taxon>Cronobacter</taxon>
    </lineage>
</organism>
<dbReference type="EC" id="7.4.2.8" evidence="1"/>
<dbReference type="EMBL" id="CP000783">
    <property type="protein sequence ID" value="ABU78462.1"/>
    <property type="molecule type" value="Genomic_DNA"/>
</dbReference>
<dbReference type="RefSeq" id="WP_012125761.1">
    <property type="nucleotide sequence ID" value="NC_009778.1"/>
</dbReference>
<dbReference type="SMR" id="A7MQ63"/>
<dbReference type="KEGG" id="esa:ESA_03240"/>
<dbReference type="PATRIC" id="fig|290339.8.peg.2871"/>
<dbReference type="HOGENOM" id="CLU_005314_3_0_6"/>
<dbReference type="Proteomes" id="UP000000260">
    <property type="component" value="Chromosome"/>
</dbReference>
<dbReference type="GO" id="GO:0031522">
    <property type="term" value="C:cell envelope Sec protein transport complex"/>
    <property type="evidence" value="ECO:0007669"/>
    <property type="project" value="TreeGrafter"/>
</dbReference>
<dbReference type="GO" id="GO:0005829">
    <property type="term" value="C:cytosol"/>
    <property type="evidence" value="ECO:0007669"/>
    <property type="project" value="TreeGrafter"/>
</dbReference>
<dbReference type="GO" id="GO:0005886">
    <property type="term" value="C:plasma membrane"/>
    <property type="evidence" value="ECO:0007669"/>
    <property type="project" value="UniProtKB-SubCell"/>
</dbReference>
<dbReference type="GO" id="GO:0005524">
    <property type="term" value="F:ATP binding"/>
    <property type="evidence" value="ECO:0007669"/>
    <property type="project" value="UniProtKB-UniRule"/>
</dbReference>
<dbReference type="GO" id="GO:0046872">
    <property type="term" value="F:metal ion binding"/>
    <property type="evidence" value="ECO:0007669"/>
    <property type="project" value="UniProtKB-KW"/>
</dbReference>
<dbReference type="GO" id="GO:0008564">
    <property type="term" value="F:protein-exporting ATPase activity"/>
    <property type="evidence" value="ECO:0007669"/>
    <property type="project" value="UniProtKB-EC"/>
</dbReference>
<dbReference type="GO" id="GO:0065002">
    <property type="term" value="P:intracellular protein transmembrane transport"/>
    <property type="evidence" value="ECO:0007669"/>
    <property type="project" value="UniProtKB-UniRule"/>
</dbReference>
<dbReference type="GO" id="GO:0017038">
    <property type="term" value="P:protein import"/>
    <property type="evidence" value="ECO:0007669"/>
    <property type="project" value="InterPro"/>
</dbReference>
<dbReference type="GO" id="GO:0006605">
    <property type="term" value="P:protein targeting"/>
    <property type="evidence" value="ECO:0007669"/>
    <property type="project" value="UniProtKB-UniRule"/>
</dbReference>
<dbReference type="GO" id="GO:0043952">
    <property type="term" value="P:protein transport by the Sec complex"/>
    <property type="evidence" value="ECO:0007669"/>
    <property type="project" value="TreeGrafter"/>
</dbReference>
<dbReference type="CDD" id="cd17928">
    <property type="entry name" value="DEXDc_SecA"/>
    <property type="match status" value="1"/>
</dbReference>
<dbReference type="CDD" id="cd18803">
    <property type="entry name" value="SF2_C_secA"/>
    <property type="match status" value="1"/>
</dbReference>
<dbReference type="FunFam" id="1.10.3060.10:FF:000001">
    <property type="entry name" value="Preprotein translocase subunit SecA"/>
    <property type="match status" value="1"/>
</dbReference>
<dbReference type="FunFam" id="3.40.50.300:FF:000081">
    <property type="entry name" value="Preprotein translocase subunit SecA"/>
    <property type="match status" value="1"/>
</dbReference>
<dbReference type="FunFam" id="3.40.50.300:FF:000113">
    <property type="entry name" value="Preprotein translocase subunit SecA"/>
    <property type="match status" value="1"/>
</dbReference>
<dbReference type="FunFam" id="3.90.1440.10:FF:000001">
    <property type="entry name" value="Preprotein translocase subunit SecA"/>
    <property type="match status" value="1"/>
</dbReference>
<dbReference type="Gene3D" id="1.10.3060.10">
    <property type="entry name" value="Helical scaffold and wing domains of SecA"/>
    <property type="match status" value="1"/>
</dbReference>
<dbReference type="Gene3D" id="3.40.50.300">
    <property type="entry name" value="P-loop containing nucleotide triphosphate hydrolases"/>
    <property type="match status" value="2"/>
</dbReference>
<dbReference type="Gene3D" id="3.90.1440.10">
    <property type="entry name" value="SecA, preprotein cross-linking domain"/>
    <property type="match status" value="1"/>
</dbReference>
<dbReference type="HAMAP" id="MF_01382">
    <property type="entry name" value="SecA"/>
    <property type="match status" value="1"/>
</dbReference>
<dbReference type="InterPro" id="IPR014001">
    <property type="entry name" value="Helicase_ATP-bd"/>
</dbReference>
<dbReference type="InterPro" id="IPR001650">
    <property type="entry name" value="Helicase_C-like"/>
</dbReference>
<dbReference type="InterPro" id="IPR027417">
    <property type="entry name" value="P-loop_NTPase"/>
</dbReference>
<dbReference type="InterPro" id="IPR004027">
    <property type="entry name" value="SEC_C_motif"/>
</dbReference>
<dbReference type="InterPro" id="IPR000185">
    <property type="entry name" value="SecA"/>
</dbReference>
<dbReference type="InterPro" id="IPR020937">
    <property type="entry name" value="SecA_CS"/>
</dbReference>
<dbReference type="InterPro" id="IPR011115">
    <property type="entry name" value="SecA_DEAD"/>
</dbReference>
<dbReference type="InterPro" id="IPR014018">
    <property type="entry name" value="SecA_motor_DEAD"/>
</dbReference>
<dbReference type="InterPro" id="IPR011130">
    <property type="entry name" value="SecA_preprotein_X-link_dom"/>
</dbReference>
<dbReference type="InterPro" id="IPR044722">
    <property type="entry name" value="SecA_SF2_C"/>
</dbReference>
<dbReference type="InterPro" id="IPR011116">
    <property type="entry name" value="SecA_Wing/Scaffold"/>
</dbReference>
<dbReference type="InterPro" id="IPR036266">
    <property type="entry name" value="SecA_Wing/Scaffold_sf"/>
</dbReference>
<dbReference type="InterPro" id="IPR036670">
    <property type="entry name" value="SecA_X-link_sf"/>
</dbReference>
<dbReference type="NCBIfam" id="NF009538">
    <property type="entry name" value="PRK12904.1"/>
    <property type="match status" value="1"/>
</dbReference>
<dbReference type="NCBIfam" id="TIGR00963">
    <property type="entry name" value="secA"/>
    <property type="match status" value="1"/>
</dbReference>
<dbReference type="PANTHER" id="PTHR30612:SF0">
    <property type="entry name" value="CHLOROPLAST PROTEIN-TRANSPORTING ATPASE"/>
    <property type="match status" value="1"/>
</dbReference>
<dbReference type="PANTHER" id="PTHR30612">
    <property type="entry name" value="SECA INNER MEMBRANE COMPONENT OF SEC PROTEIN SECRETION SYSTEM"/>
    <property type="match status" value="1"/>
</dbReference>
<dbReference type="Pfam" id="PF21090">
    <property type="entry name" value="P-loop_SecA"/>
    <property type="match status" value="1"/>
</dbReference>
<dbReference type="Pfam" id="PF02810">
    <property type="entry name" value="SEC-C"/>
    <property type="match status" value="1"/>
</dbReference>
<dbReference type="Pfam" id="PF07517">
    <property type="entry name" value="SecA_DEAD"/>
    <property type="match status" value="1"/>
</dbReference>
<dbReference type="Pfam" id="PF01043">
    <property type="entry name" value="SecA_PP_bind"/>
    <property type="match status" value="1"/>
</dbReference>
<dbReference type="Pfam" id="PF07516">
    <property type="entry name" value="SecA_SW"/>
    <property type="match status" value="1"/>
</dbReference>
<dbReference type="PRINTS" id="PR00906">
    <property type="entry name" value="SECA"/>
</dbReference>
<dbReference type="SMART" id="SM00957">
    <property type="entry name" value="SecA_DEAD"/>
    <property type="match status" value="1"/>
</dbReference>
<dbReference type="SMART" id="SM00958">
    <property type="entry name" value="SecA_PP_bind"/>
    <property type="match status" value="1"/>
</dbReference>
<dbReference type="SUPFAM" id="SSF81886">
    <property type="entry name" value="Helical scaffold and wing domains of SecA"/>
    <property type="match status" value="1"/>
</dbReference>
<dbReference type="SUPFAM" id="SSF52540">
    <property type="entry name" value="P-loop containing nucleoside triphosphate hydrolases"/>
    <property type="match status" value="2"/>
</dbReference>
<dbReference type="SUPFAM" id="SSF81767">
    <property type="entry name" value="Pre-protein crosslinking domain of SecA"/>
    <property type="match status" value="1"/>
</dbReference>
<dbReference type="PROSITE" id="PS01312">
    <property type="entry name" value="SECA"/>
    <property type="match status" value="1"/>
</dbReference>
<dbReference type="PROSITE" id="PS51196">
    <property type="entry name" value="SECA_MOTOR_DEAD"/>
    <property type="match status" value="1"/>
</dbReference>
<sequence length="901" mass="101882">MLIKMLTKVFGSRNDRTLRRMRKVVALINGMEPALEKLSDEELKAKTAEFRARLEKGETLENLLPEAFAVVREASKRVFGMRHFDVQLLGGMVLNDRCIAEMRTGEGKTLTATLPAYLNALTGKGVHVVTVNDYLAQRDAENNRPLFEFLGMSVAVNMSGMPAPAKREAYAADITYGTNNEYGFDYLRDNMAFSPEERVQRKLHYALVDEVDSILIDEARTPLIISGPAEDSSELYKKVNKIIPHLVRQEKEDSDTFQGEGHFSVDEKARQVNLTERGLVLVEELLVKEGIMDEGESLYSPGNIMLMHHVTAALRAHVLFTRDVDYIVKDGEVIIVDEHTGRTMQGRRWSDGLHQAVEAKEGVEIQNENQTLASITFQNYFRLYEKLAGMTGTADTEAFEFSSIYKLDTVVVPTNRPMIRKDLPDLVYMTEAEKIDAIIEDIKERTAKGQPVLVGTISIEKSEVISQALTKAGIEHNVLNAKFHAREADIVAQAGYPGAVTIATNMAGRGTDIMLGGSWQAEVAELEAPSEEQIAQIKADWQKRHDAVLASGGLHIIGTERHESRRIDNQLRGRSGRQGDPGSSRFYLSMEDALMRIFASDRVANMMRKLGMKPGEAIEHPWVTKAIANAQRKVESRNFDIRKQLLEYDDVANDQRRAIYTQRNELLDVADISETINSIREDVFKATIDAHIPPQSLEEMWDIPGLEERLKNDFDLELPIAQWLDKEPELHEETLRERILESAKEVYARKEEVVGAEMMRHFEKGVMLQTLDSLWKEHLAAMDYLRQGIHLRGYAQKDPKQEYKRESFAMFAAMLESLKYEVISTISKVQVRMPEEVEAMEQQRREEAERLAQMQQLSHQDDETAAAAALAEQTGERKVGRNDPCPCGSGKKYKQCHGRLS</sequence>
<name>SECA_CROS8</name>
<protein>
    <recommendedName>
        <fullName evidence="1">Protein translocase subunit SecA</fullName>
        <ecNumber evidence="1">7.4.2.8</ecNumber>
    </recommendedName>
</protein>